<reference key="1">
    <citation type="journal article" date="1995" name="Science">
        <title>Whole-genome random sequencing and assembly of Haemophilus influenzae Rd.</title>
        <authorList>
            <person name="Fleischmann R.D."/>
            <person name="Adams M.D."/>
            <person name="White O."/>
            <person name="Clayton R.A."/>
            <person name="Kirkness E.F."/>
            <person name="Kerlavage A.R."/>
            <person name="Bult C.J."/>
            <person name="Tomb J.-F."/>
            <person name="Dougherty B.A."/>
            <person name="Merrick J.M."/>
            <person name="McKenney K."/>
            <person name="Sutton G.G."/>
            <person name="FitzHugh W."/>
            <person name="Fields C.A."/>
            <person name="Gocayne J.D."/>
            <person name="Scott J.D."/>
            <person name="Shirley R."/>
            <person name="Liu L.-I."/>
            <person name="Glodek A."/>
            <person name="Kelley J.M."/>
            <person name="Weidman J.F."/>
            <person name="Phillips C.A."/>
            <person name="Spriggs T."/>
            <person name="Hedblom E."/>
            <person name="Cotton M.D."/>
            <person name="Utterback T.R."/>
            <person name="Hanna M.C."/>
            <person name="Nguyen D.T."/>
            <person name="Saudek D.M."/>
            <person name="Brandon R.C."/>
            <person name="Fine L.D."/>
            <person name="Fritchman J.L."/>
            <person name="Fuhrmann J.L."/>
            <person name="Geoghagen N.S.M."/>
            <person name="Gnehm C.L."/>
            <person name="McDonald L.A."/>
            <person name="Small K.V."/>
            <person name="Fraser C.M."/>
            <person name="Smith H.O."/>
            <person name="Venter J.C."/>
        </authorList>
    </citation>
    <scope>NUCLEOTIDE SEQUENCE [LARGE SCALE GENOMIC DNA]</scope>
    <source>
        <strain>ATCC 51907 / DSM 11121 / KW20 / Rd</strain>
    </source>
</reference>
<organism>
    <name type="scientific">Haemophilus influenzae (strain ATCC 51907 / DSM 11121 / KW20 / Rd)</name>
    <dbReference type="NCBI Taxonomy" id="71421"/>
    <lineage>
        <taxon>Bacteria</taxon>
        <taxon>Pseudomonadati</taxon>
        <taxon>Pseudomonadota</taxon>
        <taxon>Gammaproteobacteria</taxon>
        <taxon>Pasteurellales</taxon>
        <taxon>Pasteurellaceae</taxon>
        <taxon>Haemophilus</taxon>
    </lineage>
</organism>
<proteinExistence type="inferred from homology"/>
<feature type="chain" id="PRO_0000168758" description="Replication-associated recombination protein A">
    <location>
        <begin position="1"/>
        <end position="446"/>
    </location>
</feature>
<feature type="binding site" evidence="1">
    <location>
        <begin position="57"/>
        <end position="64"/>
    </location>
    <ligand>
        <name>ATP</name>
        <dbReference type="ChEBI" id="CHEBI:30616"/>
    </ligand>
</feature>
<protein>
    <recommendedName>
        <fullName>Replication-associated recombination protein A</fullName>
    </recommendedName>
</protein>
<name>RARA_HAEIN</name>
<keyword id="KW-0067">ATP-binding</keyword>
<keyword id="KW-0235">DNA replication</keyword>
<keyword id="KW-0547">Nucleotide-binding</keyword>
<keyword id="KW-1185">Reference proteome</keyword>
<evidence type="ECO:0000250" key="1">
    <source>
        <dbReference type="UniProtKB" id="P0AAZ4"/>
    </source>
</evidence>
<evidence type="ECO:0000305" key="2"/>
<gene>
    <name type="primary">rarA</name>
    <name type="ordered locus">HI_1590</name>
</gene>
<dbReference type="EMBL" id="L42023">
    <property type="protein sequence ID" value="AAC23238.1"/>
    <property type="molecule type" value="Genomic_DNA"/>
</dbReference>
<dbReference type="PIR" id="F64172">
    <property type="entry name" value="F64172"/>
</dbReference>
<dbReference type="RefSeq" id="NP_439735.1">
    <property type="nucleotide sequence ID" value="NC_000907.1"/>
</dbReference>
<dbReference type="SMR" id="P45262"/>
<dbReference type="STRING" id="71421.HI_1590"/>
<dbReference type="DNASU" id="950837"/>
<dbReference type="EnsemblBacteria" id="AAC23238">
    <property type="protein sequence ID" value="AAC23238"/>
    <property type="gene ID" value="HI_1590"/>
</dbReference>
<dbReference type="KEGG" id="hin:HI_1590"/>
<dbReference type="PATRIC" id="fig|71421.8.peg.1664"/>
<dbReference type="eggNOG" id="COG2256">
    <property type="taxonomic scope" value="Bacteria"/>
</dbReference>
<dbReference type="HOGENOM" id="CLU_017985_1_1_6"/>
<dbReference type="OrthoDB" id="9778364at2"/>
<dbReference type="PhylomeDB" id="P45262"/>
<dbReference type="BioCyc" id="HINF71421:G1GJ1-1606-MONOMER"/>
<dbReference type="Proteomes" id="UP000000579">
    <property type="component" value="Chromosome"/>
</dbReference>
<dbReference type="GO" id="GO:0005524">
    <property type="term" value="F:ATP binding"/>
    <property type="evidence" value="ECO:0007669"/>
    <property type="project" value="UniProtKB-KW"/>
</dbReference>
<dbReference type="GO" id="GO:0016887">
    <property type="term" value="F:ATP hydrolysis activity"/>
    <property type="evidence" value="ECO:0007669"/>
    <property type="project" value="InterPro"/>
</dbReference>
<dbReference type="GO" id="GO:0003677">
    <property type="term" value="F:DNA binding"/>
    <property type="evidence" value="ECO:0007669"/>
    <property type="project" value="InterPro"/>
</dbReference>
<dbReference type="GO" id="GO:0008047">
    <property type="term" value="F:enzyme activator activity"/>
    <property type="evidence" value="ECO:0000318"/>
    <property type="project" value="GO_Central"/>
</dbReference>
<dbReference type="GO" id="GO:0017116">
    <property type="term" value="F:single-stranded DNA helicase activity"/>
    <property type="evidence" value="ECO:0000318"/>
    <property type="project" value="GO_Central"/>
</dbReference>
<dbReference type="GO" id="GO:0000731">
    <property type="term" value="P:DNA synthesis involved in DNA repair"/>
    <property type="evidence" value="ECO:0000318"/>
    <property type="project" value="GO_Central"/>
</dbReference>
<dbReference type="GO" id="GO:0006261">
    <property type="term" value="P:DNA-templated DNA replication"/>
    <property type="evidence" value="ECO:0000318"/>
    <property type="project" value="GO_Central"/>
</dbReference>
<dbReference type="CDD" id="cd00009">
    <property type="entry name" value="AAA"/>
    <property type="match status" value="1"/>
</dbReference>
<dbReference type="CDD" id="cd18139">
    <property type="entry name" value="HLD_clamp_RarA"/>
    <property type="match status" value="1"/>
</dbReference>
<dbReference type="FunFam" id="1.20.272.10:FF:000001">
    <property type="entry name" value="Putative AAA family ATPase"/>
    <property type="match status" value="1"/>
</dbReference>
<dbReference type="FunFam" id="1.10.3710.10:FF:000001">
    <property type="entry name" value="Replication-associated recombination protein A"/>
    <property type="match status" value="1"/>
</dbReference>
<dbReference type="FunFam" id="1.10.8.60:FF:000029">
    <property type="entry name" value="Replication-associated recombination protein A"/>
    <property type="match status" value="1"/>
</dbReference>
<dbReference type="FunFam" id="3.40.50.300:FF:000137">
    <property type="entry name" value="Replication-associated recombination protein A"/>
    <property type="match status" value="1"/>
</dbReference>
<dbReference type="Gene3D" id="1.10.8.60">
    <property type="match status" value="1"/>
</dbReference>
<dbReference type="Gene3D" id="1.20.272.10">
    <property type="match status" value="1"/>
</dbReference>
<dbReference type="Gene3D" id="1.10.3710.10">
    <property type="entry name" value="DNA polymerase III clamp loader subunits, C-terminal domain"/>
    <property type="match status" value="1"/>
</dbReference>
<dbReference type="Gene3D" id="3.40.50.300">
    <property type="entry name" value="P-loop containing nucleotide triphosphate hydrolases"/>
    <property type="match status" value="1"/>
</dbReference>
<dbReference type="InterPro" id="IPR003593">
    <property type="entry name" value="AAA+_ATPase"/>
</dbReference>
<dbReference type="InterPro" id="IPR032423">
    <property type="entry name" value="AAA_assoc_2"/>
</dbReference>
<dbReference type="InterPro" id="IPR051314">
    <property type="entry name" value="AAA_ATPase_RarA/MGS1/WRNIP1"/>
</dbReference>
<dbReference type="InterPro" id="IPR003959">
    <property type="entry name" value="ATPase_AAA_core"/>
</dbReference>
<dbReference type="InterPro" id="IPR008921">
    <property type="entry name" value="DNA_pol3_clamp-load_cplx_C"/>
</dbReference>
<dbReference type="InterPro" id="IPR021886">
    <property type="entry name" value="MgsA_C"/>
</dbReference>
<dbReference type="InterPro" id="IPR027417">
    <property type="entry name" value="P-loop_NTPase"/>
</dbReference>
<dbReference type="PANTHER" id="PTHR13779:SF7">
    <property type="entry name" value="ATPASE WRNIP1"/>
    <property type="match status" value="1"/>
</dbReference>
<dbReference type="PANTHER" id="PTHR13779">
    <property type="entry name" value="WERNER HELICASE-INTERACTING PROTEIN 1 FAMILY MEMBER"/>
    <property type="match status" value="1"/>
</dbReference>
<dbReference type="Pfam" id="PF00004">
    <property type="entry name" value="AAA"/>
    <property type="match status" value="1"/>
</dbReference>
<dbReference type="Pfam" id="PF16193">
    <property type="entry name" value="AAA_assoc_2"/>
    <property type="match status" value="1"/>
</dbReference>
<dbReference type="Pfam" id="PF12002">
    <property type="entry name" value="MgsA_C"/>
    <property type="match status" value="1"/>
</dbReference>
<dbReference type="SMART" id="SM00382">
    <property type="entry name" value="AAA"/>
    <property type="match status" value="1"/>
</dbReference>
<dbReference type="SUPFAM" id="SSF52540">
    <property type="entry name" value="P-loop containing nucleoside triphosphate hydrolases"/>
    <property type="match status" value="1"/>
</dbReference>
<dbReference type="SUPFAM" id="SSF48019">
    <property type="entry name" value="post-AAA+ oligomerization domain-like"/>
    <property type="match status" value="1"/>
</dbReference>
<accession>P45262</accession>
<comment type="function">
    <text evidence="1">DNA-dependent ATPase that plays important roles in cellular responses to stalled DNA replication processes.</text>
</comment>
<comment type="similarity">
    <text evidence="2">Belongs to the AAA ATPase family. RarA/MGS1/WRNIP1 subfamily.</text>
</comment>
<sequence>MSNFNFDFAENDFGPLAAKMRPTSLEQYFGQSHLIGEGKPLRKAIQAGHIYSMIFWGPPGTGKTTLAEIIAQRINAEVERISAVTSGIKEIREAIDRAKQNRLADRKTILFVDEVHRFNKSQQDAFLPHIEDGTVIFIGATTENPSFELNNALLSRARVYVLKSLTTAEIEQVLQQAVEDPKRGLGKERLILEENLLQVLAEYVNGDARLALNCLELMVDMADETENGKKIDRTLLKEVLGERQARFDKQGDRFYDLISALHKSVRGSAPDAALYWYARILTAGGDPLYVARRLLAIASEDVGNADPRAMQVALAAWDCFSRVGAYEGERAIAQAIIYLSVAPKSNAVYTAFNTAKQQAKDLPDYDVPPHLRNAPTNLMKELGYGTEYRYAHDEPNAYAAGENYFPPELKDTQYYFPTNRGMEIQIKEKLERLREQDKSAVKKRYK</sequence>